<accession>C3PP88</accession>
<organism>
    <name type="scientific">Rickettsia africae (strain ESF-5)</name>
    <dbReference type="NCBI Taxonomy" id="347255"/>
    <lineage>
        <taxon>Bacteria</taxon>
        <taxon>Pseudomonadati</taxon>
        <taxon>Pseudomonadota</taxon>
        <taxon>Alphaproteobacteria</taxon>
        <taxon>Rickettsiales</taxon>
        <taxon>Rickettsiaceae</taxon>
        <taxon>Rickettsieae</taxon>
        <taxon>Rickettsia</taxon>
        <taxon>spotted fever group</taxon>
    </lineage>
</organism>
<comment type="function">
    <text evidence="1">Binds to the 23S rRNA.</text>
</comment>
<comment type="subunit">
    <text evidence="1">Part of the 50S ribosomal subunit.</text>
</comment>
<comment type="similarity">
    <text evidence="1">Belongs to the universal ribosomal protein uL15 family.</text>
</comment>
<feature type="chain" id="PRO_1000214715" description="Large ribosomal subunit protein uL15">
    <location>
        <begin position="1"/>
        <end position="153"/>
    </location>
</feature>
<feature type="region of interest" description="Disordered" evidence="2">
    <location>
        <begin position="21"/>
        <end position="41"/>
    </location>
</feature>
<feature type="compositionally biased region" description="Gly residues" evidence="2">
    <location>
        <begin position="23"/>
        <end position="35"/>
    </location>
</feature>
<gene>
    <name evidence="1" type="primary">rplO</name>
    <name type="ordered locus">RAF_ORF0893</name>
</gene>
<name>RL15_RICAE</name>
<dbReference type="EMBL" id="CP001612">
    <property type="protein sequence ID" value="ACP53748.1"/>
    <property type="molecule type" value="Genomic_DNA"/>
</dbReference>
<dbReference type="RefSeq" id="WP_004997829.1">
    <property type="nucleotide sequence ID" value="NC_012633.1"/>
</dbReference>
<dbReference type="SMR" id="C3PP88"/>
<dbReference type="GeneID" id="95361467"/>
<dbReference type="KEGG" id="raf:RAF_ORF0893"/>
<dbReference type="HOGENOM" id="CLU_055188_4_0_5"/>
<dbReference type="Proteomes" id="UP000002305">
    <property type="component" value="Chromosome"/>
</dbReference>
<dbReference type="GO" id="GO:0015934">
    <property type="term" value="C:large ribosomal subunit"/>
    <property type="evidence" value="ECO:0007669"/>
    <property type="project" value="InterPro"/>
</dbReference>
<dbReference type="GO" id="GO:0019843">
    <property type="term" value="F:rRNA binding"/>
    <property type="evidence" value="ECO:0007669"/>
    <property type="project" value="UniProtKB-UniRule"/>
</dbReference>
<dbReference type="GO" id="GO:0003735">
    <property type="term" value="F:structural constituent of ribosome"/>
    <property type="evidence" value="ECO:0007669"/>
    <property type="project" value="InterPro"/>
</dbReference>
<dbReference type="GO" id="GO:0006412">
    <property type="term" value="P:translation"/>
    <property type="evidence" value="ECO:0007669"/>
    <property type="project" value="UniProtKB-UniRule"/>
</dbReference>
<dbReference type="Gene3D" id="3.100.10.10">
    <property type="match status" value="1"/>
</dbReference>
<dbReference type="HAMAP" id="MF_01341">
    <property type="entry name" value="Ribosomal_uL15"/>
    <property type="match status" value="1"/>
</dbReference>
<dbReference type="InterPro" id="IPR030878">
    <property type="entry name" value="Ribosomal_uL15"/>
</dbReference>
<dbReference type="InterPro" id="IPR021131">
    <property type="entry name" value="Ribosomal_uL15/eL18"/>
</dbReference>
<dbReference type="InterPro" id="IPR036227">
    <property type="entry name" value="Ribosomal_uL15/eL18_sf"/>
</dbReference>
<dbReference type="InterPro" id="IPR005749">
    <property type="entry name" value="Ribosomal_uL15_bac-type"/>
</dbReference>
<dbReference type="NCBIfam" id="TIGR01071">
    <property type="entry name" value="rplO_bact"/>
    <property type="match status" value="1"/>
</dbReference>
<dbReference type="PANTHER" id="PTHR12934">
    <property type="entry name" value="50S RIBOSOMAL PROTEIN L15"/>
    <property type="match status" value="1"/>
</dbReference>
<dbReference type="PANTHER" id="PTHR12934:SF11">
    <property type="entry name" value="LARGE RIBOSOMAL SUBUNIT PROTEIN UL15M"/>
    <property type="match status" value="1"/>
</dbReference>
<dbReference type="Pfam" id="PF00828">
    <property type="entry name" value="Ribosomal_L27A"/>
    <property type="match status" value="1"/>
</dbReference>
<dbReference type="SUPFAM" id="SSF52080">
    <property type="entry name" value="Ribosomal proteins L15p and L18e"/>
    <property type="match status" value="1"/>
</dbReference>
<sequence length="153" mass="16632">MKLNELYNNIGAKKNKKRIARGIGSGKGKTGGRGIKGQKSRSGVAIKGFEGGQTPIIKRLPKRGFNCISTKKYNIINIYNIEEALADGRLSADDNITKEKLVEARVVNNKNNKKLVKLLSICSDDFAAPLSLKLDAYSSKAKDLIEKAGGKLL</sequence>
<reference key="1">
    <citation type="journal article" date="2009" name="BMC Genomics">
        <title>Analysis of the Rickettsia africae genome reveals that virulence acquisition in Rickettsia species may be explained by genome reduction.</title>
        <authorList>
            <person name="Fournier P.-E."/>
            <person name="El Karkouri K."/>
            <person name="Leroy Q."/>
            <person name="Robert C."/>
            <person name="Giumelli B."/>
            <person name="Renesto P."/>
            <person name="Socolovschi C."/>
            <person name="Parola P."/>
            <person name="Audic S."/>
            <person name="Raoult D."/>
        </authorList>
    </citation>
    <scope>NUCLEOTIDE SEQUENCE [LARGE SCALE GENOMIC DNA]</scope>
    <source>
        <strain>ESF-5</strain>
    </source>
</reference>
<evidence type="ECO:0000255" key="1">
    <source>
        <dbReference type="HAMAP-Rule" id="MF_01341"/>
    </source>
</evidence>
<evidence type="ECO:0000256" key="2">
    <source>
        <dbReference type="SAM" id="MobiDB-lite"/>
    </source>
</evidence>
<evidence type="ECO:0000305" key="3"/>
<keyword id="KW-0687">Ribonucleoprotein</keyword>
<keyword id="KW-0689">Ribosomal protein</keyword>
<keyword id="KW-0694">RNA-binding</keyword>
<keyword id="KW-0699">rRNA-binding</keyword>
<proteinExistence type="inferred from homology"/>
<protein>
    <recommendedName>
        <fullName evidence="1">Large ribosomal subunit protein uL15</fullName>
    </recommendedName>
    <alternativeName>
        <fullName evidence="3">50S ribosomal protein L15</fullName>
    </alternativeName>
</protein>